<organism>
    <name type="scientific">Rattus norvegicus</name>
    <name type="common">Rat</name>
    <dbReference type="NCBI Taxonomy" id="10116"/>
    <lineage>
        <taxon>Eukaryota</taxon>
        <taxon>Metazoa</taxon>
        <taxon>Chordata</taxon>
        <taxon>Craniata</taxon>
        <taxon>Vertebrata</taxon>
        <taxon>Euteleostomi</taxon>
        <taxon>Mammalia</taxon>
        <taxon>Eutheria</taxon>
        <taxon>Euarchontoglires</taxon>
        <taxon>Glires</taxon>
        <taxon>Rodentia</taxon>
        <taxon>Myomorpha</taxon>
        <taxon>Muroidea</taxon>
        <taxon>Muridae</taxon>
        <taxon>Murinae</taxon>
        <taxon>Rattus</taxon>
    </lineage>
</organism>
<protein>
    <recommendedName>
        <fullName evidence="11">ATP-binding cassette sub-family A member 2</fullName>
        <ecNumber evidence="1">7.6.2.-</ecNumber>
    </recommendedName>
    <alternativeName>
        <fullName>ATP-binding cassette transporter 2</fullName>
        <shortName>ATP-binding cassette 2</shortName>
    </alternativeName>
</protein>
<feature type="chain" id="PRO_0000093292" description="ATP-binding cassette sub-family A member 2">
    <location>
        <begin position="1"/>
        <end position="2434"/>
    </location>
</feature>
<feature type="transmembrane region" description="Helical" evidence="2">
    <location>
        <begin position="22"/>
        <end position="42"/>
    </location>
</feature>
<feature type="transmembrane region" description="Helical" evidence="2">
    <location>
        <begin position="54"/>
        <end position="74"/>
    </location>
</feature>
<feature type="transmembrane region" description="Helical" evidence="2">
    <location>
        <begin position="699"/>
        <end position="719"/>
    </location>
</feature>
<feature type="transmembrane region" description="Helical" evidence="2">
    <location>
        <begin position="750"/>
        <end position="770"/>
    </location>
</feature>
<feature type="transmembrane region" description="Helical" evidence="2">
    <location>
        <begin position="782"/>
        <end position="802"/>
    </location>
</feature>
<feature type="transmembrane region" description="Helical" evidence="2">
    <location>
        <begin position="813"/>
        <end position="833"/>
    </location>
</feature>
<feature type="transmembrane region" description="Helical" evidence="2">
    <location>
        <begin position="857"/>
        <end position="877"/>
    </location>
</feature>
<feature type="transmembrane region" description="Helical" evidence="2">
    <location>
        <begin position="893"/>
        <end position="913"/>
    </location>
</feature>
<feature type="transmembrane region" description="Helical" evidence="2">
    <location>
        <begin position="1461"/>
        <end position="1481"/>
    </location>
</feature>
<feature type="transmembrane region" description="Helical" evidence="2">
    <location>
        <begin position="1793"/>
        <end position="1813"/>
    </location>
</feature>
<feature type="transmembrane region" description="Helical" evidence="2">
    <location>
        <begin position="1842"/>
        <end position="1862"/>
    </location>
</feature>
<feature type="transmembrane region" description="Helical" evidence="2">
    <location>
        <begin position="1873"/>
        <end position="1893"/>
    </location>
</feature>
<feature type="transmembrane region" description="Helical" evidence="2">
    <location>
        <begin position="1906"/>
        <end position="1926"/>
    </location>
</feature>
<feature type="transmembrane region" description="Helical" evidence="2">
    <location>
        <begin position="1992"/>
        <end position="2012"/>
    </location>
</feature>
<feature type="domain" description="ABC transporter 1" evidence="3">
    <location>
        <begin position="990"/>
        <end position="1221"/>
    </location>
</feature>
<feature type="domain" description="ABC transporter 2" evidence="3">
    <location>
        <begin position="2051"/>
        <end position="2286"/>
    </location>
</feature>
<feature type="region of interest" description="Disordered" evidence="4">
    <location>
        <begin position="354"/>
        <end position="396"/>
    </location>
</feature>
<feature type="region of interest" description="Disordered" evidence="4">
    <location>
        <begin position="1225"/>
        <end position="1246"/>
    </location>
</feature>
<feature type="region of interest" description="Disordered" evidence="4">
    <location>
        <begin position="1587"/>
        <end position="1606"/>
    </location>
</feature>
<feature type="compositionally biased region" description="Low complexity" evidence="4">
    <location>
        <begin position="354"/>
        <end position="369"/>
    </location>
</feature>
<feature type="compositionally biased region" description="Polar residues" evidence="4">
    <location>
        <begin position="370"/>
        <end position="396"/>
    </location>
</feature>
<feature type="compositionally biased region" description="Polar residues" evidence="4">
    <location>
        <begin position="1228"/>
        <end position="1246"/>
    </location>
</feature>
<feature type="compositionally biased region" description="Pro residues" evidence="4">
    <location>
        <begin position="1589"/>
        <end position="1598"/>
    </location>
</feature>
<feature type="binding site" evidence="3">
    <location>
        <begin position="1024"/>
        <end position="1031"/>
    </location>
    <ligand>
        <name>ATP</name>
        <dbReference type="ChEBI" id="CHEBI:30616"/>
        <label>1</label>
    </ligand>
</feature>
<feature type="binding site" evidence="3">
    <location>
        <begin position="2088"/>
        <end position="2095"/>
    </location>
    <ligand>
        <name>ATP</name>
        <dbReference type="ChEBI" id="CHEBI:30616"/>
        <label>2</label>
    </ligand>
</feature>
<feature type="modified residue" description="N5-methylglutamine" evidence="1">
    <location>
        <position position="271"/>
    </location>
</feature>
<feature type="modified residue" description="Phosphoserine" evidence="1">
    <location>
        <position position="1238"/>
    </location>
</feature>
<feature type="modified residue" description="Phosphoserine" evidence="14">
    <location>
        <position position="1327"/>
    </location>
</feature>
<feature type="modified residue" description="Phosphoserine" evidence="14">
    <location>
        <position position="1331"/>
    </location>
</feature>
<feature type="modified residue" description="Phosphothreonine" evidence="14">
    <location>
        <position position="2411"/>
    </location>
</feature>
<feature type="glycosylation site" description="N-linked (GlcNAc...) asparagine" evidence="2">
    <location>
        <position position="14"/>
    </location>
</feature>
<feature type="glycosylation site" description="N-linked (GlcNAc...) asparagine" evidence="2">
    <location>
        <position position="89"/>
    </location>
</feature>
<feature type="glycosylation site" description="N-linked (GlcNAc...) asparagine" evidence="2">
    <location>
        <position position="168"/>
    </location>
</feature>
<feature type="glycosylation site" description="N-linked (GlcNAc...) asparagine" evidence="2">
    <location>
        <position position="173"/>
    </location>
</feature>
<feature type="glycosylation site" description="N-linked (GlcNAc...) asparagine" evidence="2">
    <location>
        <position position="305"/>
    </location>
</feature>
<feature type="glycosylation site" description="N-linked (GlcNAc...) asparagine" evidence="2">
    <location>
        <position position="368"/>
    </location>
</feature>
<feature type="glycosylation site" description="N-linked (GlcNAc...) asparagine" evidence="2">
    <location>
        <position position="379"/>
    </location>
</feature>
<feature type="glycosylation site" description="N-linked (GlcNAc...) asparagine" evidence="2">
    <location>
        <position position="420"/>
    </location>
</feature>
<feature type="glycosylation site" description="N-linked (GlcNAc...) asparagine" evidence="15">
    <location>
        <position position="432"/>
    </location>
</feature>
<feature type="glycosylation site" description="N-linked (GlcNAc...) asparagine" evidence="2">
    <location>
        <position position="476"/>
    </location>
</feature>
<feature type="glycosylation site" description="N-linked (GlcNAc...) asparagine" evidence="2">
    <location>
        <position position="484"/>
    </location>
</feature>
<feature type="glycosylation site" description="N-linked (GlcNAc...) asparagine" evidence="2">
    <location>
        <position position="494"/>
    </location>
</feature>
<feature type="glycosylation site" description="N-linked (GlcNAc...) asparagine" evidence="2">
    <location>
        <position position="530"/>
    </location>
</feature>
<feature type="glycosylation site" description="N-linked (GlcNAc...) asparagine" evidence="2">
    <location>
        <position position="549"/>
    </location>
</feature>
<feature type="glycosylation site" description="N-linked (GlcNAc...) asparagine" evidence="2">
    <location>
        <position position="590"/>
    </location>
</feature>
<feature type="glycosylation site" description="N-linked (GlcNAc...) asparagine" evidence="2">
    <location>
        <position position="600"/>
    </location>
</feature>
<feature type="glycosylation site" description="N-linked (GlcNAc...) asparagine" evidence="2">
    <location>
        <position position="628"/>
    </location>
</feature>
<feature type="glycosylation site" description="N-linked (GlcNAc...) asparagine" evidence="2">
    <location>
        <position position="1247"/>
    </location>
</feature>
<feature type="glycosylation site" description="N-linked (GlcNAc...) asparagine" evidence="2">
    <location>
        <position position="1496"/>
    </location>
</feature>
<feature type="glycosylation site" description="N-linked (GlcNAc...) asparagine" evidence="2">
    <location>
        <position position="1549"/>
    </location>
</feature>
<feature type="glycosylation site" description="N-linked (GlcNAc...) asparagine" evidence="2">
    <location>
        <position position="1557"/>
    </location>
</feature>
<feature type="glycosylation site" description="N-linked (GlcNAc...) asparagine" evidence="2">
    <location>
        <position position="1613"/>
    </location>
</feature>
<feature type="glycosylation site" description="N-linked (GlcNAc...) asparagine" evidence="2">
    <location>
        <position position="1678"/>
    </location>
</feature>
<feature type="glycosylation site" description="N-linked (GlcNAc...) asparagine" evidence="2">
    <location>
        <position position="1776"/>
    </location>
</feature>
<feature type="glycosylation site" description="N-linked (GlcNAc...) asparagine" evidence="2">
    <location>
        <position position="2055"/>
    </location>
</feature>
<comment type="function">
    <text evidence="7 9 10 11">Probable transporter, its natural substrate has not been found yet. May have a role in macrophage lipid metabolism and neural development. May play a role in myelination, perhaps as a transporter for certain kinds of myelin chemical components (PubMed:12210128). May play an important role in gamma-secretase processing of APP and thus in amyloid-beta peptide generation (PubMed:22086926). Regulates esterification of plasma membrane cholesterol by modulation of sphingolipid metabolism (PubMed:24201375).</text>
</comment>
<comment type="function">
    <text evidence="1 7 9 10">Probable lipid transporter that modulates cholesterol sequestration in the late endosome/lysosome by regulating the intracellular sphingolipid metabolism, in turn participates in cholesterol homeostasis (PubMed:24201375). May alter the transbilayer distribution of ceramide in the intraluminal membrane lipid bilayer, favoring its retention in the outer leaflet that results in increased acid ceramidase activity in the late endosome/lysosome, facilitating ceramide deacylation to sphingosine leading to the sequestration of free cholesterol in lysosomes (By similarity). In addition regulates amyloid-beta production either by activating a signaling pathway that regulates amyloid precursor protein transcription through the modulation of sphingolipid metabolism or through its role in gamma-secretase processing of APP (PubMed:22086926). May play a role in myelin formation (PubMed:12210128).</text>
</comment>
<comment type="subcellular location">
    <subcellularLocation>
        <location evidence="1">Endosome membrane</location>
        <topology evidence="1">Multi-pass membrane protein</topology>
    </subcellularLocation>
    <subcellularLocation>
        <location evidence="6 7">Lysosome membrane</location>
        <topology evidence="1">Multi-pass membrane protein</topology>
    </subcellularLocation>
    <text evidence="1">Forms discrete, punctate intracellular vesicles.</text>
</comment>
<comment type="tissue specificity">
    <text evidence="5 6 7 8">Expressed at high levels in brain, at moderate levels in heart, kidney and lung, and at low levels in skeletal muscle, stomach, spleen, colon and pancreas (PubMed:10970803). Not detected in the liver or small intestine (PubMed:10970803). In brain, highly expressed in white matter and detected in oligodendrocytes (PubMed:10970803, PubMed:11157071). Expressed in cerebellum as well as the anterior commissure (PubMed:11157071). Expressed mainly in the white matter but is also scattered in gray matter throughout the whole brain (PubMed:11157071). Expressed in myelinating cells of both ventral and dorsal restricted regions in newborn spinal cord (PubMed:12210128). Expressed in non-myelin-forming as well as in myelin-forming Schwann cells in the sciatic nerve (PubMed:17240058).</text>
</comment>
<comment type="PTM">
    <text evidence="5">N-glycosylated.</text>
</comment>
<comment type="PTM">
    <text evidence="1">Methylated at Gln-271 by N6AMT1.</text>
</comment>
<comment type="similarity">
    <text evidence="11">Belongs to the ABC transporter superfamily. ABCA family.</text>
</comment>
<name>ABCA2_RAT</name>
<reference evidence="11 12" key="1">
    <citation type="journal article" date="2000" name="Biochem. J.">
        <title>Cloning, characterization and tissue distribution of the rat ATP-binding cassette (ABC) transporter ABC2/ABCA2.</title>
        <authorList>
            <person name="Zhao L.-X."/>
            <person name="Zhou C.-J."/>
            <person name="Tanaka A."/>
            <person name="Nakata M."/>
            <person name="Hirabayashi T."/>
            <person name="Amachi T."/>
            <person name="Shioda S."/>
            <person name="Ueda K."/>
            <person name="Inagaki N."/>
        </authorList>
    </citation>
    <scope>NUCLEOTIDE SEQUENCE [MRNA]</scope>
    <scope>TISSUE SPECIFICITY</scope>
    <scope>GLYCOSYLATION</scope>
    <source>
        <tissue evidence="12">Brain</tissue>
    </source>
</reference>
<reference key="2">
    <citation type="journal article" date="2001" name="J. Neurosci.">
        <title>Atp-binding cassette transporter ABC2/ABCA2 in the rat brain: a novel mammalian lysosome-associated membrane protein and a specific marker for oligodendrocytes but not for myelin sheaths.</title>
        <authorList>
            <person name="Zhou C."/>
            <person name="Zhao L."/>
            <person name="Inagaki N."/>
            <person name="Guan J."/>
            <person name="Nakajo S."/>
            <person name="Hirabayashi T."/>
            <person name="Kikuyama S."/>
            <person name="Shioda S."/>
        </authorList>
    </citation>
    <scope>TISSUE SPECIFICITY</scope>
    <scope>SUBCELLULAR LOCATION</scope>
</reference>
<reference key="3">
    <citation type="journal article" date="2002" name="J. Comp. Neurol.">
        <title>ATP-binding cassette transporter ABCA2 (ABC2) expression in the developing spinal cord and PNS during myelination.</title>
        <authorList>
            <person name="Zhou C.J."/>
            <person name="Inagaki N."/>
            <person name="Pleasure S.J."/>
            <person name="Zhao L.X."/>
            <person name="Kikuyama S."/>
            <person name="Shioda S."/>
        </authorList>
    </citation>
    <scope>TISSUE SPECIFICITY</scope>
    <scope>SUBCELLULAR LOCATION</scope>
    <scope>FUNCTION</scope>
</reference>
<reference key="4">
    <citation type="journal article" date="2007" name="Neurosci. Lett.">
        <title>Expression of ABCA2 protein in both non-myelin-forming and myelin-forming Schwann cells in the rodent peripheral nerve.</title>
        <authorList>
            <person name="Saito T."/>
            <person name="Yamada K."/>
            <person name="Wang Y."/>
            <person name="Tanaka Y."/>
            <person name="Ohtomo K."/>
            <person name="Ishikawa K."/>
            <person name="Inagaki N."/>
        </authorList>
    </citation>
    <scope>TISSUE SPECIFICITY</scope>
</reference>
<reference key="5">
    <citation type="journal article" date="2012" name="J. Biol. Chem.">
        <title>Down-regulation of the ATP-binding cassette transporter 2 (Abca2) reduces amyloid-beta production by altering Nicastrin maturation and intracellular localization.</title>
        <authorList>
            <person name="Michaki V."/>
            <person name="Guix F.X."/>
            <person name="Vennekens K."/>
            <person name="Munck S."/>
            <person name="Dingwall C."/>
            <person name="Davis J.B."/>
            <person name="Townsend D.M."/>
            <person name="Tew K.D."/>
            <person name="Feiguin F."/>
            <person name="De Strooper B."/>
            <person name="Dotti C.G."/>
            <person name="Wahle T."/>
        </authorList>
    </citation>
    <scope>FUNCTION</scope>
</reference>
<reference key="6">
    <citation type="journal article" date="2012" name="Nat. Commun.">
        <title>Quantitative maps of protein phosphorylation sites across 14 different rat organs and tissues.</title>
        <authorList>
            <person name="Lundby A."/>
            <person name="Secher A."/>
            <person name="Lage K."/>
            <person name="Nordsborg N.B."/>
            <person name="Dmytriyev A."/>
            <person name="Lundby C."/>
            <person name="Olsen J.V."/>
        </authorList>
    </citation>
    <scope>PHOSPHORYLATION [LARGE SCALE ANALYSIS] AT SER-1327; SER-1331 AND THR-2411</scope>
    <scope>IDENTIFICATION BY MASS SPECTROMETRY [LARGE SCALE ANALYSIS]</scope>
</reference>
<reference key="7">
    <citation type="journal article" date="2013" name="J. Proteome Res.">
        <title>Site-specific glycan-peptide analysis for determination of N-glycoproteome heterogeneity.</title>
        <authorList>
            <person name="Parker B.L."/>
            <person name="Thaysen-Andersen M."/>
            <person name="Solis N."/>
            <person name="Scott N.E."/>
            <person name="Larsen M.R."/>
            <person name="Graham M.E."/>
            <person name="Packer N.H."/>
            <person name="Cordwell S.J."/>
        </authorList>
    </citation>
    <scope>GLYCOSYLATION [LARGE SCALE ANALYSIS] AT ASN-432</scope>
    <scope>IDENTIFICATION BY MASS SPECTROMETRY [LARGE SCALE ANALYSIS]</scope>
    <source>
        <tissue>Brain</tissue>
    </source>
</reference>
<reference key="8">
    <citation type="journal article" date="2014" name="Biochim. Biophys. Acta">
        <title>The ATP-binding cassette transporter-2 (ABCA2) regulates esterification of plasma membrane cholesterol by modulation of sphingolipid metabolism.</title>
        <authorList>
            <person name="Davis W. Jr."/>
        </authorList>
    </citation>
    <scope>FUNCTION</scope>
</reference>
<keyword id="KW-0067">ATP-binding</keyword>
<keyword id="KW-0967">Endosome</keyword>
<keyword id="KW-0325">Glycoprotein</keyword>
<keyword id="KW-0458">Lysosome</keyword>
<keyword id="KW-0472">Membrane</keyword>
<keyword id="KW-0488">Methylation</keyword>
<keyword id="KW-0547">Nucleotide-binding</keyword>
<keyword id="KW-0597">Phosphoprotein</keyword>
<keyword id="KW-1185">Reference proteome</keyword>
<keyword id="KW-0677">Repeat</keyword>
<keyword id="KW-1278">Translocase</keyword>
<keyword id="KW-0812">Transmembrane</keyword>
<keyword id="KW-1133">Transmembrane helix</keyword>
<keyword id="KW-0813">Transport</keyword>
<dbReference type="EC" id="7.6.2.-" evidence="1"/>
<dbReference type="EMBL" id="AB037937">
    <property type="protein sequence ID" value="BAB16596.1"/>
    <property type="molecule type" value="mRNA"/>
</dbReference>
<dbReference type="RefSeq" id="NP_077372.1">
    <property type="nucleotide sequence ID" value="NM_024396.1"/>
</dbReference>
<dbReference type="SMR" id="Q9ESR9"/>
<dbReference type="BioGRID" id="249446">
    <property type="interactions" value="1"/>
</dbReference>
<dbReference type="FunCoup" id="Q9ESR9">
    <property type="interactions" value="258"/>
</dbReference>
<dbReference type="STRING" id="10116.ENSRNOP00000020339"/>
<dbReference type="GlyCosmos" id="Q9ESR9">
    <property type="glycosylation" value="25 sites, 2 glycans"/>
</dbReference>
<dbReference type="GlyGen" id="Q9ESR9">
    <property type="glycosylation" value="26 sites, 2 N-linked glycans (1 site)"/>
</dbReference>
<dbReference type="iPTMnet" id="Q9ESR9"/>
<dbReference type="PhosphoSitePlus" id="Q9ESR9"/>
<dbReference type="jPOST" id="Q9ESR9"/>
<dbReference type="PaxDb" id="10116-ENSRNOP00000020339"/>
<dbReference type="GeneID" id="79248"/>
<dbReference type="KEGG" id="rno:79248"/>
<dbReference type="UCSC" id="RGD:620238">
    <property type="organism name" value="rat"/>
</dbReference>
<dbReference type="AGR" id="RGD:620238"/>
<dbReference type="CTD" id="20"/>
<dbReference type="RGD" id="620238">
    <property type="gene designation" value="Abca2"/>
</dbReference>
<dbReference type="eggNOG" id="KOG0059">
    <property type="taxonomic scope" value="Eukaryota"/>
</dbReference>
<dbReference type="InParanoid" id="Q9ESR9"/>
<dbReference type="PhylomeDB" id="Q9ESR9"/>
<dbReference type="Reactome" id="R-RNO-1369062">
    <property type="pathway name" value="ABC transporters in lipid homeostasis"/>
</dbReference>
<dbReference type="PRO" id="PR:Q9ESR9"/>
<dbReference type="Proteomes" id="UP000002494">
    <property type="component" value="Unplaced"/>
</dbReference>
<dbReference type="GO" id="GO:0031410">
    <property type="term" value="C:cytoplasmic vesicle"/>
    <property type="evidence" value="ECO:0000314"/>
    <property type="project" value="UniProtKB"/>
</dbReference>
<dbReference type="GO" id="GO:0005768">
    <property type="term" value="C:endosome"/>
    <property type="evidence" value="ECO:0000250"/>
    <property type="project" value="UniProtKB"/>
</dbReference>
<dbReference type="GO" id="GO:0010008">
    <property type="term" value="C:endosome membrane"/>
    <property type="evidence" value="ECO:0007669"/>
    <property type="project" value="UniProtKB-SubCell"/>
</dbReference>
<dbReference type="GO" id="GO:0043231">
    <property type="term" value="C:intracellular membrane-bounded organelle"/>
    <property type="evidence" value="ECO:0000318"/>
    <property type="project" value="GO_Central"/>
</dbReference>
<dbReference type="GO" id="GO:0005765">
    <property type="term" value="C:lysosomal membrane"/>
    <property type="evidence" value="ECO:0000314"/>
    <property type="project" value="UniProtKB"/>
</dbReference>
<dbReference type="GO" id="GO:0005764">
    <property type="term" value="C:lysosome"/>
    <property type="evidence" value="ECO:0000250"/>
    <property type="project" value="UniProtKB"/>
</dbReference>
<dbReference type="GO" id="GO:0016020">
    <property type="term" value="C:membrane"/>
    <property type="evidence" value="ECO:0000250"/>
    <property type="project" value="UniProtKB"/>
</dbReference>
<dbReference type="GO" id="GO:0005815">
    <property type="term" value="C:microtubule organizing center"/>
    <property type="evidence" value="ECO:0000314"/>
    <property type="project" value="UniProtKB"/>
</dbReference>
<dbReference type="GO" id="GO:0005886">
    <property type="term" value="C:plasma membrane"/>
    <property type="evidence" value="ECO:0000266"/>
    <property type="project" value="RGD"/>
</dbReference>
<dbReference type="GO" id="GO:0140359">
    <property type="term" value="F:ABC-type transporter activity"/>
    <property type="evidence" value="ECO:0007669"/>
    <property type="project" value="InterPro"/>
</dbReference>
<dbReference type="GO" id="GO:0005524">
    <property type="term" value="F:ATP binding"/>
    <property type="evidence" value="ECO:0000314"/>
    <property type="project" value="UniProtKB"/>
</dbReference>
<dbReference type="GO" id="GO:0016887">
    <property type="term" value="F:ATP hydrolysis activity"/>
    <property type="evidence" value="ECO:0007669"/>
    <property type="project" value="InterPro"/>
</dbReference>
<dbReference type="GO" id="GO:0042626">
    <property type="term" value="F:ATPase-coupled transmembrane transporter activity"/>
    <property type="evidence" value="ECO:0000318"/>
    <property type="project" value="GO_Central"/>
</dbReference>
<dbReference type="GO" id="GO:0099038">
    <property type="term" value="F:ceramide floppase activity"/>
    <property type="evidence" value="ECO:0000266"/>
    <property type="project" value="RGD"/>
</dbReference>
<dbReference type="GO" id="GO:0061135">
    <property type="term" value="F:endopeptidase regulator activity"/>
    <property type="evidence" value="ECO:0000266"/>
    <property type="project" value="RGD"/>
</dbReference>
<dbReference type="GO" id="GO:0005319">
    <property type="term" value="F:lipid transporter activity"/>
    <property type="evidence" value="ECO:0000318"/>
    <property type="project" value="GO_Central"/>
</dbReference>
<dbReference type="GO" id="GO:0032289">
    <property type="term" value="P:central nervous system myelin formation"/>
    <property type="evidence" value="ECO:0000314"/>
    <property type="project" value="UniProtKB"/>
</dbReference>
<dbReference type="GO" id="GO:0099040">
    <property type="term" value="P:ceramide translocation"/>
    <property type="evidence" value="ECO:0000266"/>
    <property type="project" value="RGD"/>
</dbReference>
<dbReference type="GO" id="GO:0042632">
    <property type="term" value="P:cholesterol homeostasis"/>
    <property type="evidence" value="ECO:0000250"/>
    <property type="project" value="UniProtKB"/>
</dbReference>
<dbReference type="GO" id="GO:0001573">
    <property type="term" value="P:ganglioside metabolic process"/>
    <property type="evidence" value="ECO:0000250"/>
    <property type="project" value="UniProtKB"/>
</dbReference>
<dbReference type="GO" id="GO:0006687">
    <property type="term" value="P:glycosphingolipid metabolic process"/>
    <property type="evidence" value="ECO:0000250"/>
    <property type="project" value="UniProtKB"/>
</dbReference>
<dbReference type="GO" id="GO:0090156">
    <property type="term" value="P:intracellular sphingolipid homeostasis"/>
    <property type="evidence" value="ECO:0000266"/>
    <property type="project" value="RGD"/>
</dbReference>
<dbReference type="GO" id="GO:0006869">
    <property type="term" value="P:lipid transport"/>
    <property type="evidence" value="ECO:0000318"/>
    <property type="project" value="GO_Central"/>
</dbReference>
<dbReference type="GO" id="GO:0007626">
    <property type="term" value="P:locomotory behavior"/>
    <property type="evidence" value="ECO:0000266"/>
    <property type="project" value="RGD"/>
</dbReference>
<dbReference type="GO" id="GO:0090370">
    <property type="term" value="P:negative regulation of cholesterol efflux"/>
    <property type="evidence" value="ECO:0000266"/>
    <property type="project" value="RGD"/>
</dbReference>
<dbReference type="GO" id="GO:0032384">
    <property type="term" value="P:negative regulation of intracellular cholesterol transport"/>
    <property type="evidence" value="ECO:0000266"/>
    <property type="project" value="RGD"/>
</dbReference>
<dbReference type="GO" id="GO:0071072">
    <property type="term" value="P:negative regulation of phospholipid biosynthetic process"/>
    <property type="evidence" value="ECO:0000315"/>
    <property type="project" value="ARUK-UCL"/>
</dbReference>
<dbReference type="GO" id="GO:1905601">
    <property type="term" value="P:negative regulation of receptor-mediated endocytosis involved in cholesterol transport"/>
    <property type="evidence" value="ECO:0000266"/>
    <property type="project" value="RGD"/>
</dbReference>
<dbReference type="GO" id="GO:0090155">
    <property type="term" value="P:negative regulation of sphingolipid biosynthetic process"/>
    <property type="evidence" value="ECO:0000315"/>
    <property type="project" value="ARUK-UCL"/>
</dbReference>
<dbReference type="GO" id="GO:0045939">
    <property type="term" value="P:negative regulation of steroid metabolic process"/>
    <property type="evidence" value="ECO:0000315"/>
    <property type="project" value="ARUK-UCL"/>
</dbReference>
<dbReference type="GO" id="GO:0042986">
    <property type="term" value="P:positive regulation of amyloid precursor protein biosynthetic process"/>
    <property type="evidence" value="ECO:0000266"/>
    <property type="project" value="RGD"/>
</dbReference>
<dbReference type="GO" id="GO:1902993">
    <property type="term" value="P:positive regulation of amyloid precursor protein catabolic process"/>
    <property type="evidence" value="ECO:0000266"/>
    <property type="project" value="RGD"/>
</dbReference>
<dbReference type="GO" id="GO:1902004">
    <property type="term" value="P:positive regulation of amyloid-beta formation"/>
    <property type="evidence" value="ECO:0000315"/>
    <property type="project" value="ARUK-UCL"/>
</dbReference>
<dbReference type="GO" id="GO:0032805">
    <property type="term" value="P:positive regulation of low-density lipoprotein particle receptor catabolic process"/>
    <property type="evidence" value="ECO:0000266"/>
    <property type="project" value="RGD"/>
</dbReference>
<dbReference type="GO" id="GO:0032383">
    <property type="term" value="P:regulation of intracellular cholesterol transport"/>
    <property type="evidence" value="ECO:0000250"/>
    <property type="project" value="UniProtKB"/>
</dbReference>
<dbReference type="GO" id="GO:1901873">
    <property type="term" value="P:regulation of post-translational protein modification"/>
    <property type="evidence" value="ECO:0000266"/>
    <property type="project" value="RGD"/>
</dbReference>
<dbReference type="GO" id="GO:0060049">
    <property type="term" value="P:regulation of protein glycosylation"/>
    <property type="evidence" value="ECO:0000266"/>
    <property type="project" value="RGD"/>
</dbReference>
<dbReference type="GO" id="GO:1904375">
    <property type="term" value="P:regulation of protein localization to cell periphery"/>
    <property type="evidence" value="ECO:0000266"/>
    <property type="project" value="RGD"/>
</dbReference>
<dbReference type="GO" id="GO:2000008">
    <property type="term" value="P:regulation of protein localization to cell surface"/>
    <property type="evidence" value="ECO:0000266"/>
    <property type="project" value="RGD"/>
</dbReference>
<dbReference type="GO" id="GO:0019218">
    <property type="term" value="P:regulation of steroid metabolic process"/>
    <property type="evidence" value="ECO:0000266"/>
    <property type="project" value="RGD"/>
</dbReference>
<dbReference type="GO" id="GO:0070723">
    <property type="term" value="P:response to cholesterol"/>
    <property type="evidence" value="ECO:0000266"/>
    <property type="project" value="RGD"/>
</dbReference>
<dbReference type="GO" id="GO:0048545">
    <property type="term" value="P:response to steroid hormone"/>
    <property type="evidence" value="ECO:0000250"/>
    <property type="project" value="UniProtKB"/>
</dbReference>
<dbReference type="GO" id="GO:0006684">
    <property type="term" value="P:sphingomyelin metabolic process"/>
    <property type="evidence" value="ECO:0000250"/>
    <property type="project" value="UniProtKB"/>
</dbReference>
<dbReference type="GO" id="GO:0046512">
    <property type="term" value="P:sphingosine biosynthetic process"/>
    <property type="evidence" value="ECO:0000266"/>
    <property type="project" value="RGD"/>
</dbReference>
<dbReference type="GO" id="GO:0055085">
    <property type="term" value="P:transmembrane transport"/>
    <property type="evidence" value="ECO:0000303"/>
    <property type="project" value="UniProtKB"/>
</dbReference>
<dbReference type="CDD" id="cd03263">
    <property type="entry name" value="ABC_subfamily_A"/>
    <property type="match status" value="2"/>
</dbReference>
<dbReference type="FunFam" id="3.40.50.300:FF:000511">
    <property type="entry name" value="ATP-binding cassette, sub-family A (ABC1), member 2"/>
    <property type="match status" value="1"/>
</dbReference>
<dbReference type="FunFam" id="3.40.50.300:FF:000612">
    <property type="entry name" value="ATP-binding cassette, sub-family A (ABC1), member 2"/>
    <property type="match status" value="1"/>
</dbReference>
<dbReference type="Gene3D" id="3.40.50.300">
    <property type="entry name" value="P-loop containing nucleotide triphosphate hydrolases"/>
    <property type="match status" value="2"/>
</dbReference>
<dbReference type="InterPro" id="IPR003593">
    <property type="entry name" value="AAA+_ATPase"/>
</dbReference>
<dbReference type="InterPro" id="IPR013525">
    <property type="entry name" value="ABC2_TM"/>
</dbReference>
<dbReference type="InterPro" id="IPR003439">
    <property type="entry name" value="ABC_transporter-like_ATP-bd"/>
</dbReference>
<dbReference type="InterPro" id="IPR017871">
    <property type="entry name" value="ABC_transporter-like_CS"/>
</dbReference>
<dbReference type="InterPro" id="IPR026082">
    <property type="entry name" value="ABCA"/>
</dbReference>
<dbReference type="InterPro" id="IPR027417">
    <property type="entry name" value="P-loop_NTPase"/>
</dbReference>
<dbReference type="InterPro" id="IPR056264">
    <property type="entry name" value="R2_ABCA1-4-like"/>
</dbReference>
<dbReference type="PANTHER" id="PTHR19229:SF250">
    <property type="entry name" value="ABC TRANSPORTER DOMAIN-CONTAINING PROTEIN-RELATED"/>
    <property type="match status" value="1"/>
</dbReference>
<dbReference type="PANTHER" id="PTHR19229">
    <property type="entry name" value="ATP-BINDING CASSETTE TRANSPORTER SUBFAMILY A ABCA"/>
    <property type="match status" value="1"/>
</dbReference>
<dbReference type="Pfam" id="PF12698">
    <property type="entry name" value="ABC2_membrane_3"/>
    <property type="match status" value="2"/>
</dbReference>
<dbReference type="Pfam" id="PF00005">
    <property type="entry name" value="ABC_tran"/>
    <property type="match status" value="2"/>
</dbReference>
<dbReference type="Pfam" id="PF23321">
    <property type="entry name" value="R1_ABCA1"/>
    <property type="match status" value="1"/>
</dbReference>
<dbReference type="SMART" id="SM00382">
    <property type="entry name" value="AAA"/>
    <property type="match status" value="2"/>
</dbReference>
<dbReference type="SUPFAM" id="SSF52540">
    <property type="entry name" value="P-loop containing nucleoside triphosphate hydrolases"/>
    <property type="match status" value="2"/>
</dbReference>
<dbReference type="PROSITE" id="PS00211">
    <property type="entry name" value="ABC_TRANSPORTER_1"/>
    <property type="match status" value="1"/>
</dbReference>
<dbReference type="PROSITE" id="PS50893">
    <property type="entry name" value="ABC_TRANSPORTER_2"/>
    <property type="match status" value="2"/>
</dbReference>
<evidence type="ECO:0000250" key="1">
    <source>
        <dbReference type="UniProtKB" id="Q9BZC7"/>
    </source>
</evidence>
<evidence type="ECO:0000255" key="2"/>
<evidence type="ECO:0000255" key="3">
    <source>
        <dbReference type="PROSITE-ProRule" id="PRU00434"/>
    </source>
</evidence>
<evidence type="ECO:0000256" key="4">
    <source>
        <dbReference type="SAM" id="MobiDB-lite"/>
    </source>
</evidence>
<evidence type="ECO:0000269" key="5">
    <source>
    </source>
</evidence>
<evidence type="ECO:0000269" key="6">
    <source>
    </source>
</evidence>
<evidence type="ECO:0000269" key="7">
    <source>
    </source>
</evidence>
<evidence type="ECO:0000269" key="8">
    <source>
    </source>
</evidence>
<evidence type="ECO:0000269" key="9">
    <source>
    </source>
</evidence>
<evidence type="ECO:0000269" key="10">
    <source>
    </source>
</evidence>
<evidence type="ECO:0000305" key="11"/>
<evidence type="ECO:0000312" key="12">
    <source>
        <dbReference type="EMBL" id="BAB16596.1"/>
    </source>
</evidence>
<evidence type="ECO:0000312" key="13">
    <source>
        <dbReference type="RGD" id="620238"/>
    </source>
</evidence>
<evidence type="ECO:0007744" key="14">
    <source>
    </source>
</evidence>
<evidence type="ECO:0007744" key="15">
    <source>
    </source>
</evidence>
<proteinExistence type="evidence at protein level"/>
<gene>
    <name evidence="13" type="primary">Abca2</name>
    <name evidence="13" type="synonym">Abc2</name>
</gene>
<accession>Q9ESR9</accession>
<sequence length="2434" mass="270928">MGFLHQLQLLLWKNVTLKRRSPWVLAFEIFIPLVLFFILLGLRQKKPTISVKEAFYTAAPLTSAGILPVMQSLCPDGQRDEFGFLQYANSTVTQLLERLNRVVEESNLFDPERPSLGSELEALHQRLEALSSGPGTWESHSARPAVSSFSLDSVARDKRELWRFLMQNLSLPNSTAQALLAARVDPSEVYRLLFGPLPDLDGKLGFLRKQEPWSHLGSNPLFQMEELLLAPALLEQLTCAPGSGELGRILTMPEGHQVDLQGYRDAVCSGQATARAQHFSDLATELRNQLDIAKIAQQLGFNVPNGSDPQPQAPSPQSLQALLGDLLDVQKVLQDVDVLSALALLLPQGACAGRAPAPQAGSPSGPANSTGVGANTGPNTTVEEGTQSPVTPASPDTLQGQCSAFVQLWAGLQPILCGNNRTIEPEALRRGNMSSLGFTSKEQRNLGLLVHLMTSNPKILYAPAGSEADHVILKANETFAFVGNVTHYAQVWLNISAEIRSFLEQGRLQQHLHWLQQYVADLRLHPEAMNLSLDELPPALRLDYFSLPNGTALLQQLDTIDNAACGWIQFMSKVSVDIFKGFPDEESIVNYTLNQAYQDNVTVFASVIFQTRKDGSLPPHVHYKIRQNSSFTEKTNEIRRAYWRPGPNTGGRFYFLYGFVWIQDMIERAIINTFVGHDVVEPGNYVQMFPYPCYTRDDFLFVIEHMMPLCMVISWVYSVAMTIQHIVAEKEHRLKEVMKTMGLNNAVHWVAWFITGFVQLSISVTALTAILKYGQVLMHSHVLIIWLFLAVYAVATIMFCFLVSVLYSKAKLASACGGIIYFLSYVPYMYVAIREEVAHDKITAFEKCIASLMSTTAFGLGSKYFALYEVAGVGIQWHTFSQSPVEGDDFNLLLAVTMLMVDTVVYGVLTWYIEAVHPGMYGLPRPWYFPLQKSYWLGSGRTETWEWSWPWAHAPRLSVMEEDQACAMESRHFEETRGMEEEPTHLPLVVCVDKLTKVYKNDKKLALNKLSLNLYENQVVSFLGHNGAGKTTTMSILTGLFPPTSGSATIYGHDIRTEMDEIRKNLGMCPQHNVLFDQLTVEEHLWFYSRLKSMAQEEIRKEMDKMIEDLELSNKRHSLVQTLSGGMKRKLSVAIAFVGGSRAIILDEPTAGVDPYARRAIWDLILKYKPGRTILLSTHHMDEADLLGDRIAIISHGKLKCCGSPLFLKGAYGDGYRLTLVKRPAEPGTSQEPGMASSPSGRPQLSNCSEMQVSQFIRKHVASSLLVSDTSTELSYILPSEAVKKGAFERLFQQLEHSLDALHLSSFGLMDTTLEEVFLKVSEEDQSLENSEADVKESRKDALPGAEGLTAVESQAGNLARCSELAQSQASLQSASSVGSARGDEGAGYTDGYGDYRPLFDNLQDPDSVSLQEAEMEALARVGQGSRKLEGWWLKMRQFHGLLVKRFHCARRNSKALCSQILLPAFFVCVAMTVALSVPEIGDLPPLVLSPSQYHNYTQPRGNFIPYANEERREYRLRLSPDASPQQLVSTFRLPSGVGATCVLKSPANGSLGPMLNLSSGESRLLAARFFDSMCLESFTQGLPLSNFVPPPPSPAPSDSPLSPDEDSLLAWNTSLPPTAGPETWTWAPSLPRLVHEPVRCTCSAQGTGFSCPSSVGGHPPQMRVVTGDILTDITGHNVSEYLLFTSDRFRLHRYGAITFGNIQKSIPAPIGTRTPLMVRKIAVRRVAQVLYNNKGYHSMPTYLNSLNNAILRANLPKSKGNPAAYGITVTNHPMNKTSASLSLDYLLQGTDVVIAIFIIVAMSFVPASFVVFLVAEKSTKAKHLQFVSGCNPVIYWLANYVWDMLNYLVPATCCIIILFVFDLPAYTSPTNFPAVLSLFLLYGWSITPIMYPASFWFEVPSSAYVFLIVINLFIGITATVATFLLQLFEHDKDLKVVNSYLKSCFLIFPNYNLGHGLMEIAYNEYINEYYAKIGQFDKMKSPFEWDIVTRGLVAMTVEGFVGFFLTIMCQYNFLRQPQRLPVSTKPVEDDVDVASERQRVLRGDADNDMVKIENLTKVYKSRKIGRILAVDRLCLGVRPGECFGLLGVNGAGKTSTFKMLTGDESTTGGEAFVNGHSVLKDLLQVQQSLGYCPQFDALFDELTAREHLQLYTRLRGIPWKDEAQVVRWALEKLELTKCADKPAGSYSGGNKRKLSTAIALIGYPAFIFLDEPTTGMDPKARRFLWNLILDLIKTGRSVVLTSHSMEECEAVCTRLAIMVNGRLRCLGSIQHLKNRFGDGYMITVRTKSSQNVKDVVRFFNRNFPEAMLKERHHTKVQYQLKSEHISLAQVFSKMEHVVGVLGIEDYSVSQTTLDNVFVNFAKKQSDNVEQQEAEPSTLPSPLGLLSLLRPRPAPTELRALVADEPEDLDTEDEGLISFEEERAQLSFNTDTLC</sequence>